<keyword id="KW-0238">DNA-binding</keyword>
<evidence type="ECO:0000255" key="1">
    <source>
        <dbReference type="HAMAP-Rule" id="MF_00026"/>
    </source>
</evidence>
<evidence type="ECO:0000256" key="2">
    <source>
        <dbReference type="SAM" id="MobiDB-lite"/>
    </source>
</evidence>
<comment type="similarity">
    <text evidence="1">Belongs to the PDCD5 family.</text>
</comment>
<proteinExistence type="inferred from homology"/>
<sequence length="114" mass="13371">MDDLEAIRQKRLAELQQQQSSPQNDAQAAYQQEQAQAERDEQVKAVLRQVMTPEARERLTRLRLSRKELVEQLESQLVMLAQNGRLQTKIDDEKLKVLLTQMQPQKRQTSITRM</sequence>
<feature type="chain" id="PRO_0000284561" description="DNA-binding protein Mbur_0117">
    <location>
        <begin position="1"/>
        <end position="114"/>
    </location>
</feature>
<feature type="region of interest" description="Disordered" evidence="2">
    <location>
        <begin position="14"/>
        <end position="37"/>
    </location>
</feature>
<feature type="compositionally biased region" description="Low complexity" evidence="2">
    <location>
        <begin position="16"/>
        <end position="35"/>
    </location>
</feature>
<organism>
    <name type="scientific">Methanococcoides burtonii (strain DSM 6242 / NBRC 107633 / OCM 468 / ACE-M)</name>
    <dbReference type="NCBI Taxonomy" id="259564"/>
    <lineage>
        <taxon>Archaea</taxon>
        <taxon>Methanobacteriati</taxon>
        <taxon>Methanobacteriota</taxon>
        <taxon>Stenosarchaea group</taxon>
        <taxon>Methanomicrobia</taxon>
        <taxon>Methanosarcinales</taxon>
        <taxon>Methanosarcinaceae</taxon>
        <taxon>Methanococcoides</taxon>
    </lineage>
</organism>
<dbReference type="EMBL" id="CP000300">
    <property type="protein sequence ID" value="ABE51135.1"/>
    <property type="molecule type" value="Genomic_DNA"/>
</dbReference>
<dbReference type="RefSeq" id="WP_011498299.1">
    <property type="nucleotide sequence ID" value="NC_007955.1"/>
</dbReference>
<dbReference type="SMR" id="Q12ZJ1"/>
<dbReference type="STRING" id="259564.Mbur_0117"/>
<dbReference type="GeneID" id="3998226"/>
<dbReference type="KEGG" id="mbu:Mbur_0117"/>
<dbReference type="HOGENOM" id="CLU_122978_3_0_2"/>
<dbReference type="OrthoDB" id="7912at2157"/>
<dbReference type="Proteomes" id="UP000001979">
    <property type="component" value="Chromosome"/>
</dbReference>
<dbReference type="GO" id="GO:0005829">
    <property type="term" value="C:cytosol"/>
    <property type="evidence" value="ECO:0007669"/>
    <property type="project" value="TreeGrafter"/>
</dbReference>
<dbReference type="GO" id="GO:0003677">
    <property type="term" value="F:DNA binding"/>
    <property type="evidence" value="ECO:0007669"/>
    <property type="project" value="UniProtKB-UniRule"/>
</dbReference>
<dbReference type="Gene3D" id="1.10.8.140">
    <property type="entry name" value="PDCD5-like"/>
    <property type="match status" value="1"/>
</dbReference>
<dbReference type="HAMAP" id="MF_00026">
    <property type="entry name" value="dsDNA_bind"/>
    <property type="match status" value="1"/>
</dbReference>
<dbReference type="InterPro" id="IPR022889">
    <property type="entry name" value="DNA_bind_arc"/>
</dbReference>
<dbReference type="InterPro" id="IPR002836">
    <property type="entry name" value="PDCD5-like"/>
</dbReference>
<dbReference type="InterPro" id="IPR036883">
    <property type="entry name" value="PDCD5-like_sf"/>
</dbReference>
<dbReference type="NCBIfam" id="NF003268">
    <property type="entry name" value="PRK04239.1"/>
    <property type="match status" value="1"/>
</dbReference>
<dbReference type="PANTHER" id="PTHR10840">
    <property type="entry name" value="PROGRAMMED CELL DEATH PROTEIN 5"/>
    <property type="match status" value="1"/>
</dbReference>
<dbReference type="PANTHER" id="PTHR10840:SF0">
    <property type="entry name" value="PROGRAMMED CELL DEATH PROTEIN 5"/>
    <property type="match status" value="1"/>
</dbReference>
<dbReference type="Pfam" id="PF01984">
    <property type="entry name" value="dsDNA_bind"/>
    <property type="match status" value="1"/>
</dbReference>
<dbReference type="PIRSF" id="PIRSF015730">
    <property type="entry name" value="TFAR19"/>
    <property type="match status" value="1"/>
</dbReference>
<dbReference type="SUPFAM" id="SSF46950">
    <property type="entry name" value="Double-stranded DNA-binding domain"/>
    <property type="match status" value="1"/>
</dbReference>
<protein>
    <recommendedName>
        <fullName evidence="1">DNA-binding protein Mbur_0117</fullName>
    </recommendedName>
</protein>
<name>Y117_METBU</name>
<accession>Q12ZJ1</accession>
<reference key="1">
    <citation type="journal article" date="2009" name="ISME J.">
        <title>The genome sequence of the psychrophilic archaeon, Methanococcoides burtonii: the role of genome evolution in cold adaptation.</title>
        <authorList>
            <person name="Allen M.A."/>
            <person name="Lauro F.M."/>
            <person name="Williams T.J."/>
            <person name="Burg D."/>
            <person name="Siddiqui K.S."/>
            <person name="De Francisci D."/>
            <person name="Chong K.W."/>
            <person name="Pilak O."/>
            <person name="Chew H.H."/>
            <person name="De Maere M.Z."/>
            <person name="Ting L."/>
            <person name="Katrib M."/>
            <person name="Ng C."/>
            <person name="Sowers K.R."/>
            <person name="Galperin M.Y."/>
            <person name="Anderson I.J."/>
            <person name="Ivanova N."/>
            <person name="Dalin E."/>
            <person name="Martinez M."/>
            <person name="Lapidus A."/>
            <person name="Hauser L."/>
            <person name="Land M."/>
            <person name="Thomas T."/>
            <person name="Cavicchioli R."/>
        </authorList>
    </citation>
    <scope>NUCLEOTIDE SEQUENCE [LARGE SCALE GENOMIC DNA]</scope>
    <source>
        <strain>DSM 6242 / NBRC 107633 / OCM 468 / ACE-M</strain>
    </source>
</reference>
<gene>
    <name type="ordered locus">Mbur_0117</name>
</gene>